<gene>
    <name type="primary">CecC</name>
    <name type="synonym">cec2</name>
    <name type="ORF">AGAP000692</name>
</gene>
<keyword id="KW-0027">Amidation</keyword>
<keyword id="KW-0044">Antibiotic</keyword>
<keyword id="KW-0929">Antimicrobial</keyword>
<keyword id="KW-0391">Immunity</keyword>
<keyword id="KW-0399">Innate immunity</keyword>
<keyword id="KW-1185">Reference proteome</keyword>
<keyword id="KW-0964">Secreted</keyword>
<keyword id="KW-0732">Signal</keyword>
<name>CECC_ANOGA</name>
<protein>
    <recommendedName>
        <fullName>Cecropin-C</fullName>
    </recommendedName>
    <alternativeName>
        <fullName>AgCecC</fullName>
    </alternativeName>
</protein>
<sequence>MNFKLIFLVALVLMAAFLGQTEGRRFKKFLKKVEGAGRRVANAAQKGLPLAAGVKGLVG</sequence>
<organism>
    <name type="scientific">Anopheles gambiae</name>
    <name type="common">African malaria mosquito</name>
    <dbReference type="NCBI Taxonomy" id="7165"/>
    <lineage>
        <taxon>Eukaryota</taxon>
        <taxon>Metazoa</taxon>
        <taxon>Ecdysozoa</taxon>
        <taxon>Arthropoda</taxon>
        <taxon>Hexapoda</taxon>
        <taxon>Insecta</taxon>
        <taxon>Pterygota</taxon>
        <taxon>Neoptera</taxon>
        <taxon>Endopterygota</taxon>
        <taxon>Diptera</taxon>
        <taxon>Nematocera</taxon>
        <taxon>Culicoidea</taxon>
        <taxon>Culicidae</taxon>
        <taxon>Anophelinae</taxon>
        <taxon>Anopheles</taxon>
    </lineage>
</organism>
<reference key="1">
    <citation type="journal article" date="2002" name="Insect Mol. Biol.">
        <title>Genomic organization and regulation of three cecropin genes in Anopheles gambiae.</title>
        <authorList>
            <person name="Zheng X.-L."/>
            <person name="Zheng A.L."/>
        </authorList>
    </citation>
    <scope>NUCLEOTIDE SEQUENCE [GENOMIC DNA]</scope>
</reference>
<reference key="2">
    <citation type="submission" date="2007-06" db="EMBL/GenBank/DDBJ databases">
        <title>Genetic diversity and adaptive evolution in Anopheles gambiae innate immune system.</title>
        <authorList>
            <person name="Cohuet A."/>
            <person name="Krishnakumar S."/>
            <person name="Simard F."/>
            <person name="Morlais I."/>
            <person name="Koutsos A."/>
            <person name="Fontenille D."/>
            <person name="Mindrinos M."/>
            <person name="Kafatos F.C."/>
        </authorList>
    </citation>
    <scope>NUCLEOTIDE SEQUENCE [GENOMIC DNA]</scope>
    <source>
        <strain>M1</strain>
        <strain>M2</strain>
        <strain>M3</strain>
        <strain>M4</strain>
        <strain>M5</strain>
        <strain>M6</strain>
        <strain>M7</strain>
        <strain>M8</strain>
        <strain>S1</strain>
        <strain>S2</strain>
        <strain>S3</strain>
        <strain>S4</strain>
        <strain>S5</strain>
        <strain>S6</strain>
        <strain>S7</strain>
        <strain>S8</strain>
        <strain>S9</strain>
    </source>
</reference>
<reference key="3">
    <citation type="journal article" date="2002" name="Science">
        <title>The genome sequence of the malaria mosquito Anopheles gambiae.</title>
        <authorList>
            <person name="Holt R.A."/>
            <person name="Subramanian G.M."/>
            <person name="Halpern A."/>
            <person name="Sutton G.G."/>
            <person name="Charlab R."/>
            <person name="Nusskern D.R."/>
            <person name="Wincker P."/>
            <person name="Clark A.G."/>
            <person name="Ribeiro J.M.C."/>
            <person name="Wides R."/>
            <person name="Salzberg S.L."/>
            <person name="Loftus B.J."/>
            <person name="Yandell M.D."/>
            <person name="Majoros W.H."/>
            <person name="Rusch D.B."/>
            <person name="Lai Z."/>
            <person name="Kraft C.L."/>
            <person name="Abril J.F."/>
            <person name="Anthouard V."/>
            <person name="Arensburger P."/>
            <person name="Atkinson P.W."/>
            <person name="Baden H."/>
            <person name="de Berardinis V."/>
            <person name="Baldwin D."/>
            <person name="Benes V."/>
            <person name="Biedler J."/>
            <person name="Blass C."/>
            <person name="Bolanos R."/>
            <person name="Boscus D."/>
            <person name="Barnstead M."/>
            <person name="Cai S."/>
            <person name="Center A."/>
            <person name="Chaturverdi K."/>
            <person name="Christophides G.K."/>
            <person name="Chrystal M.A.M."/>
            <person name="Clamp M."/>
            <person name="Cravchik A."/>
            <person name="Curwen V."/>
            <person name="Dana A."/>
            <person name="Delcher A."/>
            <person name="Dew I."/>
            <person name="Evans C.A."/>
            <person name="Flanigan M."/>
            <person name="Grundschober-Freimoser A."/>
            <person name="Friedli L."/>
            <person name="Gu Z."/>
            <person name="Guan P."/>
            <person name="Guigo R."/>
            <person name="Hillenmeyer M.E."/>
            <person name="Hladun S.L."/>
            <person name="Hogan J.R."/>
            <person name="Hong Y.S."/>
            <person name="Hoover J."/>
            <person name="Jaillon O."/>
            <person name="Ke Z."/>
            <person name="Kodira C.D."/>
            <person name="Kokoza E."/>
            <person name="Koutsos A."/>
            <person name="Letunic I."/>
            <person name="Levitsky A.A."/>
            <person name="Liang Y."/>
            <person name="Lin J.-J."/>
            <person name="Lobo N.F."/>
            <person name="Lopez J.R."/>
            <person name="Malek J.A."/>
            <person name="McIntosh T.C."/>
            <person name="Meister S."/>
            <person name="Miller J.R."/>
            <person name="Mobarry C."/>
            <person name="Mongin E."/>
            <person name="Murphy S.D."/>
            <person name="O'Brochta D.A."/>
            <person name="Pfannkoch C."/>
            <person name="Qi R."/>
            <person name="Regier M.A."/>
            <person name="Remington K."/>
            <person name="Shao H."/>
            <person name="Sharakhova M.V."/>
            <person name="Sitter C.D."/>
            <person name="Shetty J."/>
            <person name="Smith T.J."/>
            <person name="Strong R."/>
            <person name="Sun J."/>
            <person name="Thomasova D."/>
            <person name="Ton L.Q."/>
            <person name="Topalis P."/>
            <person name="Tu Z.J."/>
            <person name="Unger M.F."/>
            <person name="Walenz B."/>
            <person name="Wang A.H."/>
            <person name="Wang J."/>
            <person name="Wang M."/>
            <person name="Wang X."/>
            <person name="Woodford K.J."/>
            <person name="Wortman J.R."/>
            <person name="Wu M."/>
            <person name="Yao A."/>
            <person name="Zdobnov E.M."/>
            <person name="Zhang H."/>
            <person name="Zhao Q."/>
            <person name="Zhao S."/>
            <person name="Zhu S.C."/>
            <person name="Zhimulev I."/>
            <person name="Coluzzi M."/>
            <person name="della Torre A."/>
            <person name="Roth C.W."/>
            <person name="Louis C."/>
            <person name="Kalush F."/>
            <person name="Mural R.J."/>
            <person name="Myers E.W."/>
            <person name="Adams M.D."/>
            <person name="Smith H.O."/>
            <person name="Broder S."/>
            <person name="Gardner M.J."/>
            <person name="Fraser C.M."/>
            <person name="Birney E."/>
            <person name="Bork P."/>
            <person name="Brey P.T."/>
            <person name="Venter J.C."/>
            <person name="Weissenbach J."/>
            <person name="Kafatos F.C."/>
            <person name="Collins F.H."/>
            <person name="Hoffman S.L."/>
        </authorList>
    </citation>
    <scope>NUCLEOTIDE SEQUENCE [LARGE SCALE GENOMIC DNA]</scope>
    <source>
        <strain>PEST</strain>
    </source>
</reference>
<accession>Q8MUF3</accession>
<accession>B2FVD8</accession>
<accession>Q7QEE4</accession>
<feature type="signal peptide" evidence="2">
    <location>
        <begin position="1"/>
        <end position="23"/>
    </location>
</feature>
<feature type="chain" id="PRO_0000004823" description="Cecropin-C">
    <location>
        <begin position="24"/>
        <end position="58"/>
    </location>
</feature>
<feature type="modified residue" description="Valine amide" evidence="2">
    <location>
        <position position="58"/>
    </location>
</feature>
<feature type="sequence conflict" description="In Ref. 1; AAM82612." evidence="3" ref="1">
    <location>
        <position position="33"/>
    </location>
</feature>
<dbReference type="EMBL" id="AF525673">
    <property type="protein sequence ID" value="AAM82612.1"/>
    <property type="molecule type" value="Genomic_DNA"/>
</dbReference>
<dbReference type="EMBL" id="AM774769">
    <property type="protein sequence ID" value="CAO83227.1"/>
    <property type="molecule type" value="Genomic_DNA"/>
</dbReference>
<dbReference type="EMBL" id="AM774770">
    <property type="protein sequence ID" value="CAO83228.1"/>
    <property type="molecule type" value="Genomic_DNA"/>
</dbReference>
<dbReference type="EMBL" id="AM774771">
    <property type="protein sequence ID" value="CAO83229.1"/>
    <property type="molecule type" value="Genomic_DNA"/>
</dbReference>
<dbReference type="EMBL" id="AM774772">
    <property type="protein sequence ID" value="CAO83230.1"/>
    <property type="molecule type" value="Genomic_DNA"/>
</dbReference>
<dbReference type="EMBL" id="AM774773">
    <property type="protein sequence ID" value="CAO83231.1"/>
    <property type="molecule type" value="Genomic_DNA"/>
</dbReference>
<dbReference type="EMBL" id="AM774774">
    <property type="protein sequence ID" value="CAO83232.1"/>
    <property type="molecule type" value="Genomic_DNA"/>
</dbReference>
<dbReference type="EMBL" id="AM774775">
    <property type="protein sequence ID" value="CAO83233.1"/>
    <property type="molecule type" value="Genomic_DNA"/>
</dbReference>
<dbReference type="EMBL" id="AM774776">
    <property type="protein sequence ID" value="CAO83234.1"/>
    <property type="molecule type" value="Genomic_DNA"/>
</dbReference>
<dbReference type="EMBL" id="AM774777">
    <property type="protein sequence ID" value="CAO83235.1"/>
    <property type="molecule type" value="Genomic_DNA"/>
</dbReference>
<dbReference type="EMBL" id="AM774778">
    <property type="protein sequence ID" value="CAO83236.1"/>
    <property type="molecule type" value="Genomic_DNA"/>
</dbReference>
<dbReference type="EMBL" id="AM774779">
    <property type="protein sequence ID" value="CAO83237.1"/>
    <property type="molecule type" value="Genomic_DNA"/>
</dbReference>
<dbReference type="EMBL" id="AM774780">
    <property type="protein sequence ID" value="CAO83238.1"/>
    <property type="molecule type" value="Genomic_DNA"/>
</dbReference>
<dbReference type="EMBL" id="AM774781">
    <property type="protein sequence ID" value="CAO83239.1"/>
    <property type="molecule type" value="Genomic_DNA"/>
</dbReference>
<dbReference type="EMBL" id="AM774782">
    <property type="protein sequence ID" value="CAO83240.1"/>
    <property type="molecule type" value="Genomic_DNA"/>
</dbReference>
<dbReference type="EMBL" id="AM774783">
    <property type="protein sequence ID" value="CAO83241.1"/>
    <property type="molecule type" value="Genomic_DNA"/>
</dbReference>
<dbReference type="EMBL" id="AM774784">
    <property type="protein sequence ID" value="CAO83242.1"/>
    <property type="molecule type" value="Genomic_DNA"/>
</dbReference>
<dbReference type="EMBL" id="AM774785">
    <property type="protein sequence ID" value="CAO83243.1"/>
    <property type="molecule type" value="Genomic_DNA"/>
</dbReference>
<dbReference type="EMBL" id="AAAB01008847">
    <property type="protein sequence ID" value="EAA06806.4"/>
    <property type="molecule type" value="Genomic_DNA"/>
</dbReference>
<dbReference type="SMR" id="Q8MUF3"/>
<dbReference type="FunCoup" id="Q8MUF3">
    <property type="interactions" value="106"/>
</dbReference>
<dbReference type="STRING" id="7165.Q8MUF3"/>
<dbReference type="PaxDb" id="7165-AGAP000692-PA"/>
<dbReference type="EnsemblMetazoa" id="AGAP000692-RA">
    <property type="protein sequence ID" value="AGAP000692-PA"/>
    <property type="gene ID" value="AGAP000692"/>
</dbReference>
<dbReference type="GeneID" id="1272277"/>
<dbReference type="KEGG" id="aga:1272277"/>
<dbReference type="VEuPathDB" id="VectorBase:AGAMI1_007092"/>
<dbReference type="VEuPathDB" id="VectorBase:AGAP000692"/>
<dbReference type="eggNOG" id="ENOG502TB6D">
    <property type="taxonomic scope" value="Eukaryota"/>
</dbReference>
<dbReference type="HOGENOM" id="CLU_187909_1_1_1"/>
<dbReference type="InParanoid" id="Q8MUF3"/>
<dbReference type="OMA" id="NTMNFKL"/>
<dbReference type="PhylomeDB" id="Q8MUF3"/>
<dbReference type="Proteomes" id="UP000007062">
    <property type="component" value="Chromosome X"/>
</dbReference>
<dbReference type="GO" id="GO:0005615">
    <property type="term" value="C:extracellular space"/>
    <property type="evidence" value="ECO:0000318"/>
    <property type="project" value="GO_Central"/>
</dbReference>
<dbReference type="GO" id="GO:0019731">
    <property type="term" value="P:antibacterial humoral response"/>
    <property type="evidence" value="ECO:0000318"/>
    <property type="project" value="GO_Central"/>
</dbReference>
<dbReference type="GO" id="GO:0050829">
    <property type="term" value="P:defense response to Gram-negative bacterium"/>
    <property type="evidence" value="ECO:0000318"/>
    <property type="project" value="GO_Central"/>
</dbReference>
<dbReference type="GO" id="GO:0050830">
    <property type="term" value="P:defense response to Gram-positive bacterium"/>
    <property type="evidence" value="ECO:0000318"/>
    <property type="project" value="GO_Central"/>
</dbReference>
<dbReference type="GO" id="GO:0045087">
    <property type="term" value="P:innate immune response"/>
    <property type="evidence" value="ECO:0007669"/>
    <property type="project" value="UniProtKB-KW"/>
</dbReference>
<dbReference type="InterPro" id="IPR000875">
    <property type="entry name" value="Cecropin"/>
</dbReference>
<dbReference type="InterPro" id="IPR020400">
    <property type="entry name" value="Cecropin_insect"/>
</dbReference>
<dbReference type="PANTHER" id="PTHR38329">
    <property type="entry name" value="CECROPIN-A1-RELATED"/>
    <property type="match status" value="1"/>
</dbReference>
<dbReference type="PANTHER" id="PTHR38329:SF1">
    <property type="entry name" value="CECROPIN-A1-RELATED"/>
    <property type="match status" value="1"/>
</dbReference>
<dbReference type="Pfam" id="PF00272">
    <property type="entry name" value="Cecropin"/>
    <property type="match status" value="1"/>
</dbReference>
<proteinExistence type="inferred from homology"/>
<comment type="function">
    <text evidence="1">Cecropins have lytic and antibacterial activity against several Gram-positive and Gram-negative bacteria.</text>
</comment>
<comment type="subcellular location">
    <subcellularLocation>
        <location evidence="1">Secreted</location>
    </subcellularLocation>
</comment>
<comment type="similarity">
    <text evidence="3">Belongs to the cecropin family.</text>
</comment>
<evidence type="ECO:0000250" key="1"/>
<evidence type="ECO:0000255" key="2"/>
<evidence type="ECO:0000305" key="3"/>